<sequence length="427" mass="49106">MILKQAILTLVLVNANLFAQEPPKTYSSTDKETRQGPPKPPMGKRWVLNPDFSDEFNGTELDTTKWLDHHPTWIGRAPGLFMSSQVSVGDGFLKMEGKKLEKDTIVHAYGKDITFNIAGAAVVSKKATKFGYYECRVKAAATTMSTTFWFSSSNNFKGPKDCDRYGLEWDIHESIGREGDFNGSYFASGMHSNAHFWYTDCNGKKYDHRAPQVKFEDAKLTSEDFNVYGGWWRDESTASYYYNNRPPKHQKFYDKVKKKPFDQPMYMRLVNETYPFPWIELPNAEELSDPSKNTVYYDWVRAYRLVDVNDPNSEVEKDPTLKLYHENVTFPSATIEHKRSKSLEIPLSYQANEDREIAFILFDNEGKKIKEAILTAYAGYANLEYTLQLDQKLPLGSPYKLSAHIRPLKGNKKNSLDESTVYIHLTK</sequence>
<comment type="function">
    <text evidence="1">Cleaves the sulfated polysaccharide porphyran at the (1-&gt;4) linkages between beta-D-galactopyranose and alpha-L-galactopyranose-6-sulfate, forming mostly the disaccharide alpha-L-galactopyranose-6-sulfate-(1-&gt;3)-beta-D-galactose.</text>
</comment>
<comment type="catalytic activity">
    <reaction>
        <text>Hydrolysis of beta-D-galactopyranose-(1-&gt;4)-alpha-L-galactopyranose-6-sulfate linkages in porphyran.</text>
        <dbReference type="EC" id="3.2.1.178"/>
    </reaction>
</comment>
<comment type="subcellular location">
    <subcellularLocation>
        <location evidence="7">Periplasm</location>
    </subcellularLocation>
</comment>
<comment type="similarity">
    <text evidence="7">Belongs to the glycosyl hydrolase 16 family.</text>
</comment>
<keyword id="KW-0326">Glycosidase</keyword>
<keyword id="KW-0378">Hydrolase</keyword>
<keyword id="KW-0574">Periplasm</keyword>
<keyword id="KW-1185">Reference proteome</keyword>
<keyword id="KW-0732">Signal</keyword>
<feature type="signal peptide" evidence="4">
    <location>
        <begin position="1"/>
        <end position="19"/>
    </location>
</feature>
<feature type="chain" id="PRO_0000422023" description="Beta-porphyranase D">
    <location>
        <begin position="20"/>
        <end position="427"/>
    </location>
</feature>
<feature type="domain" description="GH16" evidence="5">
    <location>
        <begin position="32"/>
        <end position="308"/>
    </location>
</feature>
<feature type="region of interest" description="Disordered" evidence="6">
    <location>
        <begin position="23"/>
        <end position="45"/>
    </location>
</feature>
<feature type="active site" description="Nucleophile" evidence="3">
    <location>
        <position position="168"/>
    </location>
</feature>
<feature type="active site" description="Proton donor" evidence="3">
    <location>
        <position position="173"/>
    </location>
</feature>
<feature type="binding site" evidence="2">
    <location>
        <position position="73"/>
    </location>
    <ligand>
        <name>substrate</name>
    </ligand>
</feature>
<feature type="binding site" evidence="2">
    <location>
        <position position="76"/>
    </location>
    <ligand>
        <name>substrate</name>
    </ligand>
</feature>
<feature type="binding site" evidence="2">
    <location>
        <position position="168"/>
    </location>
    <ligand>
        <name>substrate</name>
    </ligand>
</feature>
<feature type="binding site" evidence="2">
    <location>
        <position position="173"/>
    </location>
    <ligand>
        <name>substrate</name>
    </ligand>
</feature>
<feature type="binding site" evidence="2">
    <location>
        <position position="272"/>
    </location>
    <ligand>
        <name>substrate</name>
    </ligand>
</feature>
<reference key="1">
    <citation type="journal article" date="2010" name="Nature">
        <title>Transfer of carbohydrate-active enzymes from marine bacteria to Japanese gut microbiota.</title>
        <authorList>
            <person name="Hehemann J.H."/>
            <person name="Correc G."/>
            <person name="Barbeyron T."/>
            <person name="Helbert W."/>
            <person name="Czjzek M."/>
            <person name="Michel G."/>
        </authorList>
    </citation>
    <scope>NUCLEOTIDE SEQUENCE [GENOMIC DNA]</scope>
    <source>
        <strain>DSM 12802 / CCUG 47099 / CIP 106680 / KCTC 12921 / NCIMB 13871 / Dsij</strain>
    </source>
</reference>
<reference key="2">
    <citation type="submission" date="2009-07" db="EMBL/GenBank/DDBJ databases">
        <title>Complete genome sequence of Zobellia galactanivorans Dsij.</title>
        <authorList>
            <consortium name="Genoscope - CEA"/>
        </authorList>
    </citation>
    <scope>NUCLEOTIDE SEQUENCE [LARGE SCALE GENOMIC DNA]</scope>
    <source>
        <strain>DSM 12802 / CCUG 47099 / CIP 106680 / KCTC 12921 / NCIMB 13871 / Dsij</strain>
    </source>
</reference>
<dbReference type="EC" id="3.2.1.178"/>
<dbReference type="EMBL" id="FQ073840">
    <property type="protein sequence ID" value="CBM41184.1"/>
    <property type="molecule type" value="Genomic_DNA"/>
</dbReference>
<dbReference type="EMBL" id="FP476056">
    <property type="protein sequence ID" value="CAZ97766.1"/>
    <property type="molecule type" value="Genomic_DNA"/>
</dbReference>
<dbReference type="RefSeq" id="WP_013994956.1">
    <property type="nucleotide sequence ID" value="NC_015844.1"/>
</dbReference>
<dbReference type="SMR" id="D7GXG2"/>
<dbReference type="STRING" id="63186.ZOBELLIA_3628"/>
<dbReference type="CAZy" id="GH16">
    <property type="family name" value="Glycoside Hydrolase Family 16"/>
</dbReference>
<dbReference type="KEGG" id="zga:ZOBELLIA_3628"/>
<dbReference type="HOGENOM" id="CLU_642431_0_0_10"/>
<dbReference type="OrthoDB" id="657277at2"/>
<dbReference type="Proteomes" id="UP000008898">
    <property type="component" value="Chromosome"/>
</dbReference>
<dbReference type="GO" id="GO:0042597">
    <property type="term" value="C:periplasmic space"/>
    <property type="evidence" value="ECO:0007669"/>
    <property type="project" value="UniProtKB-SubCell"/>
</dbReference>
<dbReference type="GO" id="GO:0004553">
    <property type="term" value="F:hydrolase activity, hydrolyzing O-glycosyl compounds"/>
    <property type="evidence" value="ECO:0007669"/>
    <property type="project" value="InterPro"/>
</dbReference>
<dbReference type="GO" id="GO:0005975">
    <property type="term" value="P:carbohydrate metabolic process"/>
    <property type="evidence" value="ECO:0007669"/>
    <property type="project" value="InterPro"/>
</dbReference>
<dbReference type="Gene3D" id="2.60.120.200">
    <property type="match status" value="1"/>
</dbReference>
<dbReference type="InterPro" id="IPR013320">
    <property type="entry name" value="ConA-like_dom_sf"/>
</dbReference>
<dbReference type="InterPro" id="IPR000757">
    <property type="entry name" value="GH16"/>
</dbReference>
<dbReference type="SUPFAM" id="SSF49899">
    <property type="entry name" value="Concanavalin A-like lectins/glucanases"/>
    <property type="match status" value="1"/>
</dbReference>
<dbReference type="PROSITE" id="PS51762">
    <property type="entry name" value="GH16_2"/>
    <property type="match status" value="1"/>
</dbReference>
<organism>
    <name type="scientific">Zobellia galactanivorans (strain DSM 12802 / CCUG 47099 / CIP 106680 / NCIMB 13871 / Dsij)</name>
    <dbReference type="NCBI Taxonomy" id="63186"/>
    <lineage>
        <taxon>Bacteria</taxon>
        <taxon>Pseudomonadati</taxon>
        <taxon>Bacteroidota</taxon>
        <taxon>Flavobacteriia</taxon>
        <taxon>Flavobacteriales</taxon>
        <taxon>Flavobacteriaceae</taxon>
        <taxon>Zobellia</taxon>
    </lineage>
</organism>
<protein>
    <recommendedName>
        <fullName>Beta-porphyranase D</fullName>
        <ecNumber>3.2.1.178</ecNumber>
    </recommendedName>
</protein>
<name>PORD_ZOBGA</name>
<gene>
    <name type="primary">porD</name>
    <name type="ordered locus">zobellia_3628</name>
</gene>
<accession>D7GXG2</accession>
<proteinExistence type="inferred from homology"/>
<evidence type="ECO:0000250" key="1"/>
<evidence type="ECO:0000250" key="2">
    <source>
        <dbReference type="UniProtKB" id="D7GXG0"/>
    </source>
</evidence>
<evidence type="ECO:0000250" key="3">
    <source>
        <dbReference type="UniProtKB" id="G0L322"/>
    </source>
</evidence>
<evidence type="ECO:0000255" key="4"/>
<evidence type="ECO:0000255" key="5">
    <source>
        <dbReference type="PROSITE-ProRule" id="PRU01098"/>
    </source>
</evidence>
<evidence type="ECO:0000256" key="6">
    <source>
        <dbReference type="SAM" id="MobiDB-lite"/>
    </source>
</evidence>
<evidence type="ECO:0000305" key="7"/>